<comment type="function">
    <text evidence="1">Promotes RNA polymerase assembly. Latches the N- and C-terminal regions of the beta' subunit thereby facilitating its interaction with the beta and alpha subunits.</text>
</comment>
<comment type="catalytic activity">
    <reaction evidence="1">
        <text>RNA(n) + a ribonucleoside 5'-triphosphate = RNA(n+1) + diphosphate</text>
        <dbReference type="Rhea" id="RHEA:21248"/>
        <dbReference type="Rhea" id="RHEA-COMP:14527"/>
        <dbReference type="Rhea" id="RHEA-COMP:17342"/>
        <dbReference type="ChEBI" id="CHEBI:33019"/>
        <dbReference type="ChEBI" id="CHEBI:61557"/>
        <dbReference type="ChEBI" id="CHEBI:140395"/>
        <dbReference type="EC" id="2.7.7.6"/>
    </reaction>
</comment>
<comment type="subunit">
    <text evidence="1">The RNAP catalytic core consists of 2 alpha, 1 beta, 1 beta' and 1 omega subunit. When a sigma factor is associated with the core the holoenzyme is formed, which can initiate transcription.</text>
</comment>
<comment type="similarity">
    <text evidence="1">Belongs to the RNA polymerase subunit omega family.</text>
</comment>
<proteinExistence type="inferred from homology"/>
<keyword id="KW-0240">DNA-directed RNA polymerase</keyword>
<keyword id="KW-0548">Nucleotidyltransferase</keyword>
<keyword id="KW-0804">Transcription</keyword>
<keyword id="KW-0808">Transferase</keyword>
<evidence type="ECO:0000255" key="1">
    <source>
        <dbReference type="HAMAP-Rule" id="MF_00366"/>
    </source>
</evidence>
<dbReference type="EC" id="2.7.7.6" evidence="1"/>
<dbReference type="EMBL" id="CP000124">
    <property type="protein sequence ID" value="ABA51134.1"/>
    <property type="molecule type" value="Genomic_DNA"/>
</dbReference>
<dbReference type="RefSeq" id="WP_004185855.1">
    <property type="nucleotide sequence ID" value="NC_007434.1"/>
</dbReference>
<dbReference type="SMR" id="Q3JPT0"/>
<dbReference type="EnsemblBacteria" id="ABA51134">
    <property type="protein sequence ID" value="ABA51134"/>
    <property type="gene ID" value="BURPS1710b_3048"/>
</dbReference>
<dbReference type="GeneID" id="93061155"/>
<dbReference type="KEGG" id="bpm:BURPS1710b_3048"/>
<dbReference type="HOGENOM" id="CLU_125406_5_2_4"/>
<dbReference type="Proteomes" id="UP000002700">
    <property type="component" value="Chromosome I"/>
</dbReference>
<dbReference type="GO" id="GO:0000428">
    <property type="term" value="C:DNA-directed RNA polymerase complex"/>
    <property type="evidence" value="ECO:0007669"/>
    <property type="project" value="UniProtKB-KW"/>
</dbReference>
<dbReference type="GO" id="GO:0003677">
    <property type="term" value="F:DNA binding"/>
    <property type="evidence" value="ECO:0007669"/>
    <property type="project" value="UniProtKB-UniRule"/>
</dbReference>
<dbReference type="GO" id="GO:0003899">
    <property type="term" value="F:DNA-directed RNA polymerase activity"/>
    <property type="evidence" value="ECO:0007669"/>
    <property type="project" value="UniProtKB-UniRule"/>
</dbReference>
<dbReference type="GO" id="GO:0006351">
    <property type="term" value="P:DNA-templated transcription"/>
    <property type="evidence" value="ECO:0007669"/>
    <property type="project" value="UniProtKB-UniRule"/>
</dbReference>
<dbReference type="Gene3D" id="3.90.940.10">
    <property type="match status" value="1"/>
</dbReference>
<dbReference type="HAMAP" id="MF_00366">
    <property type="entry name" value="RNApol_bact_RpoZ"/>
    <property type="match status" value="1"/>
</dbReference>
<dbReference type="InterPro" id="IPR003716">
    <property type="entry name" value="DNA-dir_RNA_pol_omega"/>
</dbReference>
<dbReference type="InterPro" id="IPR006110">
    <property type="entry name" value="Pol_omega/Rpo6/RPB6"/>
</dbReference>
<dbReference type="InterPro" id="IPR036161">
    <property type="entry name" value="RPB6/omega-like_sf"/>
</dbReference>
<dbReference type="NCBIfam" id="TIGR00690">
    <property type="entry name" value="rpoZ"/>
    <property type="match status" value="1"/>
</dbReference>
<dbReference type="PANTHER" id="PTHR34476">
    <property type="entry name" value="DNA-DIRECTED RNA POLYMERASE SUBUNIT OMEGA"/>
    <property type="match status" value="1"/>
</dbReference>
<dbReference type="PANTHER" id="PTHR34476:SF1">
    <property type="entry name" value="DNA-DIRECTED RNA POLYMERASE SUBUNIT OMEGA"/>
    <property type="match status" value="1"/>
</dbReference>
<dbReference type="Pfam" id="PF01192">
    <property type="entry name" value="RNA_pol_Rpb6"/>
    <property type="match status" value="1"/>
</dbReference>
<dbReference type="SMART" id="SM01409">
    <property type="entry name" value="RNA_pol_Rpb6"/>
    <property type="match status" value="1"/>
</dbReference>
<dbReference type="SUPFAM" id="SSF63562">
    <property type="entry name" value="RPB6/omega subunit-like"/>
    <property type="match status" value="1"/>
</dbReference>
<organism>
    <name type="scientific">Burkholderia pseudomallei (strain 1710b)</name>
    <dbReference type="NCBI Taxonomy" id="320372"/>
    <lineage>
        <taxon>Bacteria</taxon>
        <taxon>Pseudomonadati</taxon>
        <taxon>Pseudomonadota</taxon>
        <taxon>Betaproteobacteria</taxon>
        <taxon>Burkholderiales</taxon>
        <taxon>Burkholderiaceae</taxon>
        <taxon>Burkholderia</taxon>
        <taxon>pseudomallei group</taxon>
    </lineage>
</organism>
<reference key="1">
    <citation type="journal article" date="2010" name="Genome Biol. Evol.">
        <title>Continuing evolution of Burkholderia mallei through genome reduction and large-scale rearrangements.</title>
        <authorList>
            <person name="Losada L."/>
            <person name="Ronning C.M."/>
            <person name="DeShazer D."/>
            <person name="Woods D."/>
            <person name="Fedorova N."/>
            <person name="Kim H.S."/>
            <person name="Shabalina S.A."/>
            <person name="Pearson T.R."/>
            <person name="Brinkac L."/>
            <person name="Tan P."/>
            <person name="Nandi T."/>
            <person name="Crabtree J."/>
            <person name="Badger J."/>
            <person name="Beckstrom-Sternberg S."/>
            <person name="Saqib M."/>
            <person name="Schutzer S.E."/>
            <person name="Keim P."/>
            <person name="Nierman W.C."/>
        </authorList>
    </citation>
    <scope>NUCLEOTIDE SEQUENCE [LARGE SCALE GENOMIC DNA]</scope>
    <source>
        <strain>1710b</strain>
    </source>
</reference>
<gene>
    <name evidence="1" type="primary">rpoZ</name>
    <name type="ordered locus">BURPS1710b_3048</name>
</gene>
<sequence length="67" mass="7400">MARITVEDCLKQIPNRFELALAATYRARQLAQGHTPKIESRDKPTVVALREIAAGQVGVEMLKKVPA</sequence>
<name>RPOZ_BURP1</name>
<protein>
    <recommendedName>
        <fullName evidence="1">DNA-directed RNA polymerase subunit omega</fullName>
        <shortName evidence="1">RNAP omega subunit</shortName>
        <ecNumber evidence="1">2.7.7.6</ecNumber>
    </recommendedName>
    <alternativeName>
        <fullName evidence="1">RNA polymerase omega subunit</fullName>
    </alternativeName>
    <alternativeName>
        <fullName evidence="1">Transcriptase subunit omega</fullName>
    </alternativeName>
</protein>
<accession>Q3JPT0</accession>
<feature type="chain" id="PRO_0000237444" description="DNA-directed RNA polymerase subunit omega">
    <location>
        <begin position="1"/>
        <end position="67"/>
    </location>
</feature>